<name>SIM22_HUMAN</name>
<protein>
    <recommendedName>
        <fullName evidence="5">Small integral membrane protein 22</fullName>
    </recommendedName>
    <alternativeName>
        <fullName evidence="4">Cancer-associated small integral membrane open reading frame 1</fullName>
    </alternativeName>
</protein>
<gene>
    <name evidence="6" type="primary">SMIM22</name>
    <name evidence="4" type="synonym">CASIMO1</name>
</gene>
<evidence type="ECO:0000255" key="1"/>
<evidence type="ECO:0000256" key="2">
    <source>
        <dbReference type="SAM" id="MobiDB-lite"/>
    </source>
</evidence>
<evidence type="ECO:0000269" key="3">
    <source>
    </source>
</evidence>
<evidence type="ECO:0000303" key="4">
    <source>
    </source>
</evidence>
<evidence type="ECO:0000305" key="5"/>
<evidence type="ECO:0000312" key="6">
    <source>
        <dbReference type="HGNC" id="HGNC:48329"/>
    </source>
</evidence>
<sequence>MAVSTEELEATVQEVLGRLKSHQFFQSTWDTVAFIVFLTFMGTVLLLLLLVVAHCCCCSSPGPRRESPRKERPKGVDNLALEP</sequence>
<organism>
    <name type="scientific">Homo sapiens</name>
    <name type="common">Human</name>
    <dbReference type="NCBI Taxonomy" id="9606"/>
    <lineage>
        <taxon>Eukaryota</taxon>
        <taxon>Metazoa</taxon>
        <taxon>Chordata</taxon>
        <taxon>Craniata</taxon>
        <taxon>Vertebrata</taxon>
        <taxon>Euteleostomi</taxon>
        <taxon>Mammalia</taxon>
        <taxon>Eutheria</taxon>
        <taxon>Euarchontoglires</taxon>
        <taxon>Primates</taxon>
        <taxon>Haplorrhini</taxon>
        <taxon>Catarrhini</taxon>
        <taxon>Hominidae</taxon>
        <taxon>Homo</taxon>
    </lineage>
</organism>
<reference key="1">
    <citation type="journal article" date="2018" name="Oncogene">
        <title>The cancer-associated microprotein CASIMO1 controls cell proliferation and interacts with squalene epoxidase modulating lipid droplet formation.</title>
        <authorList>
            <person name="Polycarpou-Schwarz M."/>
            <person name="Gross M."/>
            <person name="Mestdagh P."/>
            <person name="Schott J."/>
            <person name="Grund S.E."/>
            <person name="Hildenbrand C."/>
            <person name="Rom J."/>
            <person name="Aulmann S."/>
            <person name="Sinn H.P."/>
            <person name="Vandesompele J."/>
            <person name="Diederichs S."/>
        </authorList>
    </citation>
    <scope>NUCLEOTIDE SEQUENCE [MRNA] (ISOFORM 3)</scope>
    <scope>FUNCTION</scope>
    <scope>SUBCELLULAR LOCATION</scope>
    <scope>INTERACTION WITH CANX; DDOST AND SQLE</scope>
    <scope>INDUCTION</scope>
</reference>
<reference key="2">
    <citation type="submission" date="2004-03" db="EMBL/GenBank/DDBJ databases">
        <title>WashU-Harvard pancreas EST project.</title>
        <authorList>
            <person name="Melton D."/>
            <person name="Meadows A."/>
            <person name="Clifton S."/>
            <person name="Hillier L."/>
            <person name="Marra M."/>
            <person name="Pape D."/>
            <person name="Wylie T."/>
            <person name="Martin J."/>
            <person name="Blistain A."/>
            <person name="Schmitt A."/>
            <person name="Theising B."/>
            <person name="Ritter E."/>
            <person name="Ronko I."/>
            <person name="Bennett J."/>
            <person name="Cardenas M."/>
            <person name="Gibbons M."/>
            <person name="McCann R."/>
            <person name="Cole R."/>
            <person name="Tsagareishvili R."/>
            <person name="Williams T."/>
            <person name="Jackson Y."/>
            <person name="Bowers Y."/>
        </authorList>
    </citation>
    <scope>NUCLEOTIDE SEQUENCE [LARGE SCALE MRNA] (ISOFORM 2)</scope>
    <source>
        <tissue>Pancreatic islet</tissue>
    </source>
</reference>
<reference key="3">
    <citation type="journal article" date="2004" name="Nature">
        <title>The sequence and analysis of duplication-rich human chromosome 16.</title>
        <authorList>
            <person name="Martin J."/>
            <person name="Han C."/>
            <person name="Gordon L.A."/>
            <person name="Terry A."/>
            <person name="Prabhakar S."/>
            <person name="She X."/>
            <person name="Xie G."/>
            <person name="Hellsten U."/>
            <person name="Chan Y.M."/>
            <person name="Altherr M."/>
            <person name="Couronne O."/>
            <person name="Aerts A."/>
            <person name="Bajorek E."/>
            <person name="Black S."/>
            <person name="Blumer H."/>
            <person name="Branscomb E."/>
            <person name="Brown N.C."/>
            <person name="Bruno W.J."/>
            <person name="Buckingham J.M."/>
            <person name="Callen D.F."/>
            <person name="Campbell C.S."/>
            <person name="Campbell M.L."/>
            <person name="Campbell E.W."/>
            <person name="Caoile C."/>
            <person name="Challacombe J.F."/>
            <person name="Chasteen L.A."/>
            <person name="Chertkov O."/>
            <person name="Chi H.C."/>
            <person name="Christensen M."/>
            <person name="Clark L.M."/>
            <person name="Cohn J.D."/>
            <person name="Denys M."/>
            <person name="Detter J.C."/>
            <person name="Dickson M."/>
            <person name="Dimitrijevic-Bussod M."/>
            <person name="Escobar J."/>
            <person name="Fawcett J.J."/>
            <person name="Flowers D."/>
            <person name="Fotopulos D."/>
            <person name="Glavina T."/>
            <person name="Gomez M."/>
            <person name="Gonzales E."/>
            <person name="Goodstein D."/>
            <person name="Goodwin L.A."/>
            <person name="Grady D.L."/>
            <person name="Grigoriev I."/>
            <person name="Groza M."/>
            <person name="Hammon N."/>
            <person name="Hawkins T."/>
            <person name="Haydu L."/>
            <person name="Hildebrand C.E."/>
            <person name="Huang W."/>
            <person name="Israni S."/>
            <person name="Jett J."/>
            <person name="Jewett P.B."/>
            <person name="Kadner K."/>
            <person name="Kimball H."/>
            <person name="Kobayashi A."/>
            <person name="Krawczyk M.-C."/>
            <person name="Leyba T."/>
            <person name="Longmire J.L."/>
            <person name="Lopez F."/>
            <person name="Lou Y."/>
            <person name="Lowry S."/>
            <person name="Ludeman T."/>
            <person name="Manohar C.F."/>
            <person name="Mark G.A."/>
            <person name="McMurray K.L."/>
            <person name="Meincke L.J."/>
            <person name="Morgan J."/>
            <person name="Moyzis R.K."/>
            <person name="Mundt M.O."/>
            <person name="Munk A.C."/>
            <person name="Nandkeshwar R.D."/>
            <person name="Pitluck S."/>
            <person name="Pollard M."/>
            <person name="Predki P."/>
            <person name="Parson-Quintana B."/>
            <person name="Ramirez L."/>
            <person name="Rash S."/>
            <person name="Retterer J."/>
            <person name="Ricke D.O."/>
            <person name="Robinson D.L."/>
            <person name="Rodriguez A."/>
            <person name="Salamov A."/>
            <person name="Saunders E.H."/>
            <person name="Scott D."/>
            <person name="Shough T."/>
            <person name="Stallings R.L."/>
            <person name="Stalvey M."/>
            <person name="Sutherland R.D."/>
            <person name="Tapia R."/>
            <person name="Tesmer J.G."/>
            <person name="Thayer N."/>
            <person name="Thompson L.S."/>
            <person name="Tice H."/>
            <person name="Torney D.C."/>
            <person name="Tran-Gyamfi M."/>
            <person name="Tsai M."/>
            <person name="Ulanovsky L.E."/>
            <person name="Ustaszewska A."/>
            <person name="Vo N."/>
            <person name="White P.S."/>
            <person name="Williams A.L."/>
            <person name="Wills P.L."/>
            <person name="Wu J.-R."/>
            <person name="Wu K."/>
            <person name="Yang J."/>
            <person name="DeJong P."/>
            <person name="Bruce D."/>
            <person name="Doggett N.A."/>
            <person name="Deaven L."/>
            <person name="Schmutz J."/>
            <person name="Grimwood J."/>
            <person name="Richardson P."/>
            <person name="Rokhsar D.S."/>
            <person name="Eichler E.E."/>
            <person name="Gilna P."/>
            <person name="Lucas S.M."/>
            <person name="Myers R.M."/>
            <person name="Rubin E.M."/>
            <person name="Pennacchio L.A."/>
        </authorList>
    </citation>
    <scope>NUCLEOTIDE SEQUENCE [LARGE SCALE GENOMIC DNA]</scope>
</reference>
<reference key="4">
    <citation type="journal article" date="2004" name="Genome Res.">
        <title>The status, quality, and expansion of the NIH full-length cDNA project: the Mammalian Gene Collection (MGC).</title>
        <authorList>
            <consortium name="The MGC Project Team"/>
        </authorList>
    </citation>
    <scope>NUCLEOTIDE SEQUENCE [LARGE SCALE MRNA] (ISOFORMS 2 AND 3)</scope>
    <source>
        <tissue>Brain</tissue>
        <tissue>Prostate</tissue>
    </source>
</reference>
<dbReference type="EMBL" id="KX065456">
    <property type="protein sequence ID" value="AND76299.1"/>
    <property type="molecule type" value="mRNA"/>
</dbReference>
<dbReference type="EMBL" id="CK903133">
    <property type="status" value="NOT_ANNOTATED_CDS"/>
    <property type="molecule type" value="mRNA"/>
</dbReference>
<dbReference type="EMBL" id="AC020663">
    <property type="status" value="NOT_ANNOTATED_CDS"/>
    <property type="molecule type" value="Genomic_DNA"/>
</dbReference>
<dbReference type="EMBL" id="BC022385">
    <property type="status" value="NOT_ANNOTATED_CDS"/>
    <property type="molecule type" value="mRNA"/>
</dbReference>
<dbReference type="EMBL" id="BC035868">
    <property type="status" value="NOT_ANNOTATED_CDS"/>
    <property type="molecule type" value="mRNA"/>
</dbReference>
<dbReference type="EMBL" id="BC048326">
    <property type="status" value="NOT_ANNOTATED_CDS"/>
    <property type="molecule type" value="mRNA"/>
</dbReference>
<dbReference type="EMBL" id="BI767985">
    <property type="status" value="NOT_ANNOTATED_CDS"/>
    <property type="molecule type" value="mRNA"/>
</dbReference>
<dbReference type="CCDS" id="CCDS59258.1">
    <molecule id="K7EJ46-3"/>
</dbReference>
<dbReference type="CCDS" id="CCDS59259.1">
    <molecule id="K7EJ46-2"/>
</dbReference>
<dbReference type="RefSeq" id="NP_001240719.1">
    <molecule id="K7EJ46-3"/>
    <property type="nucleotide sequence ID" value="NM_001253790.1"/>
</dbReference>
<dbReference type="RefSeq" id="NP_001240720.1">
    <molecule id="K7EJ46-2"/>
    <property type="nucleotide sequence ID" value="NM_001253791.1"/>
</dbReference>
<dbReference type="RefSeq" id="NP_001240722.1">
    <molecule id="K7EJ46-3"/>
    <property type="nucleotide sequence ID" value="NM_001253793.2"/>
</dbReference>
<dbReference type="RefSeq" id="NP_001240723.1">
    <molecule id="K7EJ46-2"/>
    <property type="nucleotide sequence ID" value="NM_001253794.2"/>
</dbReference>
<dbReference type="RefSeq" id="XP_011520801.1">
    <property type="nucleotide sequence ID" value="XM_011522499.2"/>
</dbReference>
<dbReference type="RefSeq" id="XP_011520802.1">
    <molecule id="K7EJ46-2"/>
    <property type="nucleotide sequence ID" value="XM_011522500.3"/>
</dbReference>
<dbReference type="RefSeq" id="XP_011520803.1">
    <molecule id="K7EJ46-2"/>
    <property type="nucleotide sequence ID" value="XM_011522501.3"/>
</dbReference>
<dbReference type="RefSeq" id="XP_054236356.1">
    <molecule id="K7EJ46-2"/>
    <property type="nucleotide sequence ID" value="XM_054380381.1"/>
</dbReference>
<dbReference type="RefSeq" id="XP_054236357.1">
    <molecule id="K7EJ46-2"/>
    <property type="nucleotide sequence ID" value="XM_054380382.1"/>
</dbReference>
<dbReference type="RefSeq" id="XP_054236358.1">
    <molecule id="K7EJ46-2"/>
    <property type="nucleotide sequence ID" value="XM_054380383.1"/>
</dbReference>
<dbReference type="SMR" id="K7EJ46"/>
<dbReference type="FunCoup" id="K7EJ46">
    <property type="interactions" value="10"/>
</dbReference>
<dbReference type="IntAct" id="K7EJ46">
    <property type="interactions" value="12"/>
</dbReference>
<dbReference type="STRING" id="9606.ENSP00000481592"/>
<dbReference type="BioMuta" id="SMIM22"/>
<dbReference type="jPOST" id="K7EJ46"/>
<dbReference type="MassIVE" id="K7EJ46"/>
<dbReference type="PaxDb" id="9606-ENSP00000481592"/>
<dbReference type="PeptideAtlas" id="K7EJ46"/>
<dbReference type="Antibodypedia" id="77901">
    <property type="antibodies" value="4 antibodies from 4 providers"/>
</dbReference>
<dbReference type="DNASU" id="440335"/>
<dbReference type="Ensembl" id="ENST00000586005.6">
    <molecule id="K7EJ46-2"/>
    <property type="protein sequence ID" value="ENSP00000464748.1"/>
    <property type="gene ID" value="ENSG00000267795.6"/>
</dbReference>
<dbReference type="Ensembl" id="ENST00000586440.1">
    <molecule id="K7EJ46-2"/>
    <property type="protein sequence ID" value="ENSP00000465037.1"/>
    <property type="gene ID" value="ENSG00000267795.6"/>
</dbReference>
<dbReference type="Ensembl" id="ENST00000588606.5">
    <molecule id="K7EJ46-3"/>
    <property type="protein sequence ID" value="ENSP00000464737.1"/>
    <property type="gene ID" value="ENSG00000267795.6"/>
</dbReference>
<dbReference type="Ensembl" id="ENST00000589327.5">
    <molecule id="K7EJ46-2"/>
    <property type="protein sequence ID" value="ENSP00000468237.1"/>
    <property type="gene ID" value="ENSG00000267795.6"/>
</dbReference>
<dbReference type="Ensembl" id="ENST00000589721.5">
    <molecule id="K7EJ46-3"/>
    <property type="protein sequence ID" value="ENSP00000465660.1"/>
    <property type="gene ID" value="ENSG00000267795.6"/>
</dbReference>
<dbReference type="Ensembl" id="ENST00000591870.1">
    <molecule id="K7EJ46-3"/>
    <property type="protein sequence ID" value="ENSP00000467010.1"/>
    <property type="gene ID" value="ENSG00000267795.6"/>
</dbReference>
<dbReference type="Ensembl" id="ENST00000615889.4">
    <molecule id="K7EJ46-2"/>
    <property type="protein sequence ID" value="ENSP00000481592.1"/>
    <property type="gene ID" value="ENSG00000267795.6"/>
</dbReference>
<dbReference type="GeneID" id="440335"/>
<dbReference type="KEGG" id="hsa:440335"/>
<dbReference type="MANE-Select" id="ENST00000586005.6">
    <molecule id="K7EJ46-2"/>
    <property type="protein sequence ID" value="ENSP00000464748.1"/>
    <property type="RefSeq nucleotide sequence ID" value="NM_001253794.2"/>
    <property type="RefSeq protein sequence ID" value="NP_001240723.1"/>
</dbReference>
<dbReference type="UCSC" id="uc002cxt.4">
    <molecule id="K7EJ46-3"/>
    <property type="organism name" value="human"/>
</dbReference>
<dbReference type="AGR" id="HGNC:48329"/>
<dbReference type="CTD" id="440335"/>
<dbReference type="DisGeNET" id="440335"/>
<dbReference type="GeneCards" id="SMIM22"/>
<dbReference type="HGNC" id="HGNC:48329">
    <property type="gene designation" value="SMIM22"/>
</dbReference>
<dbReference type="HPA" id="ENSG00000267795">
    <property type="expression patterns" value="Tissue enhanced (intestine, pancreas, salivary gland, stomach)"/>
</dbReference>
<dbReference type="neXtProt" id="NX_K7EJ46"/>
<dbReference type="OpenTargets" id="ENSG00000267795"/>
<dbReference type="VEuPathDB" id="HostDB:ENSG00000267795"/>
<dbReference type="eggNOG" id="ENOG502S40K">
    <property type="taxonomic scope" value="Eukaryota"/>
</dbReference>
<dbReference type="GeneTree" id="ENSGT00770000120884"/>
<dbReference type="HOGENOM" id="CLU_2573181_0_0_1"/>
<dbReference type="InParanoid" id="K7EJ46"/>
<dbReference type="OMA" id="IAHCCCH"/>
<dbReference type="OrthoDB" id="9538566at2759"/>
<dbReference type="PAN-GO" id="K7EJ46">
    <property type="GO annotations" value="1 GO annotation based on evolutionary models"/>
</dbReference>
<dbReference type="PathwayCommons" id="K7EJ46"/>
<dbReference type="BioGRID-ORCS" id="440335">
    <property type="hits" value="23 hits in 1050 CRISPR screens"/>
</dbReference>
<dbReference type="ChiTaRS" id="SMIM22">
    <property type="organism name" value="human"/>
</dbReference>
<dbReference type="GenomeRNAi" id="440335"/>
<dbReference type="Pharos" id="K7EJ46">
    <property type="development level" value="Tdark"/>
</dbReference>
<dbReference type="PRO" id="PR:K7EJ46"/>
<dbReference type="Proteomes" id="UP000005640">
    <property type="component" value="Chromosome 16"/>
</dbReference>
<dbReference type="RNAct" id="K7EJ46">
    <property type="molecule type" value="protein"/>
</dbReference>
<dbReference type="Bgee" id="ENSG00000267795">
    <property type="expression patterns" value="Expressed in mucosa of transverse colon and 100 other cell types or tissues"/>
</dbReference>
<dbReference type="ExpressionAtlas" id="K7EJ46">
    <property type="expression patterns" value="baseline and differential"/>
</dbReference>
<dbReference type="GO" id="GO:0005770">
    <property type="term" value="C:late endosome"/>
    <property type="evidence" value="ECO:0007669"/>
    <property type="project" value="UniProtKB-SubCell"/>
</dbReference>
<dbReference type="GO" id="GO:0016020">
    <property type="term" value="C:membrane"/>
    <property type="evidence" value="ECO:0007669"/>
    <property type="project" value="UniProtKB-SubCell"/>
</dbReference>
<dbReference type="GO" id="GO:0140042">
    <property type="term" value="P:lipid droplet formation"/>
    <property type="evidence" value="ECO:0000315"/>
    <property type="project" value="UniProtKB"/>
</dbReference>
<dbReference type="GO" id="GO:0030335">
    <property type="term" value="P:positive regulation of cell migration"/>
    <property type="evidence" value="ECO:0000315"/>
    <property type="project" value="UniProtKB"/>
</dbReference>
<dbReference type="GO" id="GO:0032956">
    <property type="term" value="P:regulation of actin cytoskeleton organization"/>
    <property type="evidence" value="ECO:0000315"/>
    <property type="project" value="UniProtKB"/>
</dbReference>
<dbReference type="GO" id="GO:0051726">
    <property type="term" value="P:regulation of cell cycle"/>
    <property type="evidence" value="ECO:0000315"/>
    <property type="project" value="UniProtKB"/>
</dbReference>
<dbReference type="GO" id="GO:0042127">
    <property type="term" value="P:regulation of cell population proliferation"/>
    <property type="evidence" value="ECO:0000315"/>
    <property type="project" value="UniProtKB"/>
</dbReference>
<dbReference type="CDD" id="cd20255">
    <property type="entry name" value="CASIMO1_SMIM22"/>
    <property type="match status" value="1"/>
</dbReference>
<dbReference type="InterPro" id="IPR053081">
    <property type="entry name" value="SIM_Modulators"/>
</dbReference>
<dbReference type="InterPro" id="IPR031671">
    <property type="entry name" value="SMIM5/18/22"/>
</dbReference>
<dbReference type="PANTHER" id="PTHR36982">
    <property type="entry name" value="CLCA DOMAIN-CONTAINING PROTEIN"/>
    <property type="match status" value="1"/>
</dbReference>
<dbReference type="PANTHER" id="PTHR36982:SF3">
    <property type="entry name" value="SMALL INTEGRAL MEMBRANE PROTEIN 22"/>
    <property type="match status" value="1"/>
</dbReference>
<dbReference type="Pfam" id="PF15831">
    <property type="entry name" value="SMIM5_18_22"/>
    <property type="match status" value="1"/>
</dbReference>
<feature type="chain" id="PRO_0000424385" description="Small integral membrane protein 22">
    <location>
        <begin position="1"/>
        <end position="83"/>
    </location>
</feature>
<feature type="transmembrane region" description="Helical" evidence="1">
    <location>
        <begin position="32"/>
        <end position="52"/>
    </location>
</feature>
<feature type="region of interest" description="Disordered" evidence="2">
    <location>
        <begin position="60"/>
        <end position="83"/>
    </location>
</feature>
<feature type="compositionally biased region" description="Basic and acidic residues" evidence="2">
    <location>
        <begin position="63"/>
        <end position="75"/>
    </location>
</feature>
<feature type="splice variant" id="VSP_060203" description="In isoform 2.">
    <original>R</original>
    <variation>RKVSPW</variation>
    <location>
        <position position="69"/>
    </location>
</feature>
<accession>K7EJ46</accession>
<accession>A0A1U9AC72</accession>
<accession>K7EIG5</accession>
<accession>K7EIH2</accession>
<proteinExistence type="evidence at protein level"/>
<comment type="function">
    <text evidence="3">May modulate lipid droplet formation throught interaction with SQLE.</text>
</comment>
<comment type="subunit">
    <text evidence="3">Interacts with CANX and DDOST (PubMed:29765154). Interacts with SQLE; this interaction modulates lipid droplet formation (PubMed:29765154).</text>
</comment>
<comment type="subcellular location">
    <subcellularLocation>
        <location evidence="5">Membrane</location>
        <topology evidence="5">Single-pass membrane protein</topology>
    </subcellularLocation>
    <subcellularLocation>
        <location>Late endosome</location>
    </subcellularLocation>
    <text evidence="3">Partially colocalizedes with LAMP1 in late endosome.</text>
</comment>
<comment type="alternative products">
    <event type="alternative splicing"/>
    <isoform>
        <id>K7EJ46-3</id>
        <name>3</name>
        <sequence type="displayed"/>
    </isoform>
    <isoform>
        <id>K7EJ46-2</id>
        <name>2</name>
        <sequence type="described" ref="VSP_060203"/>
    </isoform>
</comment>
<comment type="induction">
    <text evidence="3">Up-regulated in breast cancer.</text>
</comment>
<keyword id="KW-0025">Alternative splicing</keyword>
<keyword id="KW-0967">Endosome</keyword>
<keyword id="KW-0472">Membrane</keyword>
<keyword id="KW-1267">Proteomics identification</keyword>
<keyword id="KW-1185">Reference proteome</keyword>
<keyword id="KW-0812">Transmembrane</keyword>
<keyword id="KW-1133">Transmembrane helix</keyword>